<proteinExistence type="inferred from homology"/>
<protein>
    <recommendedName>
        <fullName evidence="1">Probable GTP-binding protein EngB</fullName>
    </recommendedName>
</protein>
<gene>
    <name evidence="1" type="primary">engB</name>
    <name type="ordered locus">PEPE_1140</name>
</gene>
<dbReference type="EMBL" id="CP000422">
    <property type="protein sequence ID" value="ABJ68194.1"/>
    <property type="molecule type" value="Genomic_DNA"/>
</dbReference>
<dbReference type="SMR" id="Q03F28"/>
<dbReference type="STRING" id="278197.PEPE_1140"/>
<dbReference type="GeneID" id="33062439"/>
<dbReference type="KEGG" id="ppe:PEPE_1140"/>
<dbReference type="eggNOG" id="COG0218">
    <property type="taxonomic scope" value="Bacteria"/>
</dbReference>
<dbReference type="HOGENOM" id="CLU_033732_3_0_9"/>
<dbReference type="OrthoDB" id="9804921at2"/>
<dbReference type="Proteomes" id="UP000000773">
    <property type="component" value="Chromosome"/>
</dbReference>
<dbReference type="GO" id="GO:0005829">
    <property type="term" value="C:cytosol"/>
    <property type="evidence" value="ECO:0007669"/>
    <property type="project" value="TreeGrafter"/>
</dbReference>
<dbReference type="GO" id="GO:0005525">
    <property type="term" value="F:GTP binding"/>
    <property type="evidence" value="ECO:0007669"/>
    <property type="project" value="UniProtKB-UniRule"/>
</dbReference>
<dbReference type="GO" id="GO:0046872">
    <property type="term" value="F:metal ion binding"/>
    <property type="evidence" value="ECO:0007669"/>
    <property type="project" value="UniProtKB-KW"/>
</dbReference>
<dbReference type="GO" id="GO:0000917">
    <property type="term" value="P:division septum assembly"/>
    <property type="evidence" value="ECO:0007669"/>
    <property type="project" value="UniProtKB-KW"/>
</dbReference>
<dbReference type="CDD" id="cd01876">
    <property type="entry name" value="YihA_EngB"/>
    <property type="match status" value="1"/>
</dbReference>
<dbReference type="FunFam" id="3.40.50.300:FF:000098">
    <property type="entry name" value="Probable GTP-binding protein EngB"/>
    <property type="match status" value="1"/>
</dbReference>
<dbReference type="Gene3D" id="3.40.50.300">
    <property type="entry name" value="P-loop containing nucleotide triphosphate hydrolases"/>
    <property type="match status" value="1"/>
</dbReference>
<dbReference type="HAMAP" id="MF_00321">
    <property type="entry name" value="GTPase_EngB"/>
    <property type="match status" value="1"/>
</dbReference>
<dbReference type="InterPro" id="IPR030393">
    <property type="entry name" value="G_ENGB_dom"/>
</dbReference>
<dbReference type="InterPro" id="IPR006073">
    <property type="entry name" value="GTP-bd"/>
</dbReference>
<dbReference type="InterPro" id="IPR019987">
    <property type="entry name" value="GTP-bd_ribosome_bio_YsxC"/>
</dbReference>
<dbReference type="InterPro" id="IPR027417">
    <property type="entry name" value="P-loop_NTPase"/>
</dbReference>
<dbReference type="InterPro" id="IPR005225">
    <property type="entry name" value="Small_GTP-bd"/>
</dbReference>
<dbReference type="NCBIfam" id="TIGR03598">
    <property type="entry name" value="GTPase_YsxC"/>
    <property type="match status" value="1"/>
</dbReference>
<dbReference type="NCBIfam" id="TIGR00231">
    <property type="entry name" value="small_GTP"/>
    <property type="match status" value="1"/>
</dbReference>
<dbReference type="PANTHER" id="PTHR11649:SF13">
    <property type="entry name" value="ENGB-TYPE G DOMAIN-CONTAINING PROTEIN"/>
    <property type="match status" value="1"/>
</dbReference>
<dbReference type="PANTHER" id="PTHR11649">
    <property type="entry name" value="MSS1/TRME-RELATED GTP-BINDING PROTEIN"/>
    <property type="match status" value="1"/>
</dbReference>
<dbReference type="Pfam" id="PF01926">
    <property type="entry name" value="MMR_HSR1"/>
    <property type="match status" value="1"/>
</dbReference>
<dbReference type="SUPFAM" id="SSF52540">
    <property type="entry name" value="P-loop containing nucleoside triphosphate hydrolases"/>
    <property type="match status" value="1"/>
</dbReference>
<dbReference type="PROSITE" id="PS51706">
    <property type="entry name" value="G_ENGB"/>
    <property type="match status" value="1"/>
</dbReference>
<reference key="1">
    <citation type="journal article" date="2006" name="Proc. Natl. Acad. Sci. U.S.A.">
        <title>Comparative genomics of the lactic acid bacteria.</title>
        <authorList>
            <person name="Makarova K.S."/>
            <person name="Slesarev A."/>
            <person name="Wolf Y.I."/>
            <person name="Sorokin A."/>
            <person name="Mirkin B."/>
            <person name="Koonin E.V."/>
            <person name="Pavlov A."/>
            <person name="Pavlova N."/>
            <person name="Karamychev V."/>
            <person name="Polouchine N."/>
            <person name="Shakhova V."/>
            <person name="Grigoriev I."/>
            <person name="Lou Y."/>
            <person name="Rohksar D."/>
            <person name="Lucas S."/>
            <person name="Huang K."/>
            <person name="Goodstein D.M."/>
            <person name="Hawkins T."/>
            <person name="Plengvidhya V."/>
            <person name="Welker D."/>
            <person name="Hughes J."/>
            <person name="Goh Y."/>
            <person name="Benson A."/>
            <person name="Baldwin K."/>
            <person name="Lee J.-H."/>
            <person name="Diaz-Muniz I."/>
            <person name="Dosti B."/>
            <person name="Smeianov V."/>
            <person name="Wechter W."/>
            <person name="Barabote R."/>
            <person name="Lorca G."/>
            <person name="Altermann E."/>
            <person name="Barrangou R."/>
            <person name="Ganesan B."/>
            <person name="Xie Y."/>
            <person name="Rawsthorne H."/>
            <person name="Tamir D."/>
            <person name="Parker C."/>
            <person name="Breidt F."/>
            <person name="Broadbent J.R."/>
            <person name="Hutkins R."/>
            <person name="O'Sullivan D."/>
            <person name="Steele J."/>
            <person name="Unlu G."/>
            <person name="Saier M.H. Jr."/>
            <person name="Klaenhammer T."/>
            <person name="Richardson P."/>
            <person name="Kozyavkin S."/>
            <person name="Weimer B.C."/>
            <person name="Mills D.A."/>
        </authorList>
    </citation>
    <scope>NUCLEOTIDE SEQUENCE [LARGE SCALE GENOMIC DNA]</scope>
    <source>
        <strain>ATCC 25745 / CCUG 21536 / LMG 10740 / 183-1w</strain>
    </source>
</reference>
<accession>Q03F28</accession>
<organism>
    <name type="scientific">Pediococcus pentosaceus (strain ATCC 25745 / CCUG 21536 / LMG 10740 / 183-1w)</name>
    <dbReference type="NCBI Taxonomy" id="278197"/>
    <lineage>
        <taxon>Bacteria</taxon>
        <taxon>Bacillati</taxon>
        <taxon>Bacillota</taxon>
        <taxon>Bacilli</taxon>
        <taxon>Lactobacillales</taxon>
        <taxon>Lactobacillaceae</taxon>
        <taxon>Pediococcus</taxon>
    </lineage>
</organism>
<feature type="chain" id="PRO_1000005837" description="Probable GTP-binding protein EngB">
    <location>
        <begin position="1"/>
        <end position="195"/>
    </location>
</feature>
<feature type="domain" description="EngB-type G" evidence="1">
    <location>
        <begin position="22"/>
        <end position="195"/>
    </location>
</feature>
<feature type="binding site" evidence="1">
    <location>
        <begin position="30"/>
        <end position="37"/>
    </location>
    <ligand>
        <name>GTP</name>
        <dbReference type="ChEBI" id="CHEBI:37565"/>
    </ligand>
</feature>
<feature type="binding site" evidence="1">
    <location>
        <position position="37"/>
    </location>
    <ligand>
        <name>Mg(2+)</name>
        <dbReference type="ChEBI" id="CHEBI:18420"/>
    </ligand>
</feature>
<feature type="binding site" evidence="1">
    <location>
        <begin position="57"/>
        <end position="61"/>
    </location>
    <ligand>
        <name>GTP</name>
        <dbReference type="ChEBI" id="CHEBI:37565"/>
    </ligand>
</feature>
<feature type="binding site" evidence="1">
    <location>
        <position position="59"/>
    </location>
    <ligand>
        <name>Mg(2+)</name>
        <dbReference type="ChEBI" id="CHEBI:18420"/>
    </ligand>
</feature>
<feature type="binding site" evidence="1">
    <location>
        <begin position="75"/>
        <end position="78"/>
    </location>
    <ligand>
        <name>GTP</name>
        <dbReference type="ChEBI" id="CHEBI:37565"/>
    </ligand>
</feature>
<feature type="binding site" evidence="1">
    <location>
        <begin position="142"/>
        <end position="145"/>
    </location>
    <ligand>
        <name>GTP</name>
        <dbReference type="ChEBI" id="CHEBI:37565"/>
    </ligand>
</feature>
<feature type="binding site" evidence="1">
    <location>
        <begin position="173"/>
        <end position="176"/>
    </location>
    <ligand>
        <name>GTP</name>
        <dbReference type="ChEBI" id="CHEBI:37565"/>
    </ligand>
</feature>
<sequence>MEVHNVELQISAVRPDQYPEQGYPEIALVGRSNVGKSSLTNTLINRKSYARTSSQPGKTQTLNFYRVEDQLFFVDVPGYGYAKVSQKEREKWGKMIEKYITSRKELKGVISLVDARHEPTDDDITMYQYLRYYDIPVLVVATKSDKIARGKWNQHESKIKKALDFDGSSAFQMFSAQTKMGKEEVWKWIEDRMGE</sequence>
<comment type="function">
    <text evidence="1">Necessary for normal cell division and for the maintenance of normal septation.</text>
</comment>
<comment type="cofactor">
    <cofactor evidence="1">
        <name>Mg(2+)</name>
        <dbReference type="ChEBI" id="CHEBI:18420"/>
    </cofactor>
</comment>
<comment type="similarity">
    <text evidence="1">Belongs to the TRAFAC class TrmE-Era-EngA-EngB-Septin-like GTPase superfamily. EngB GTPase family.</text>
</comment>
<keyword id="KW-0131">Cell cycle</keyword>
<keyword id="KW-0132">Cell division</keyword>
<keyword id="KW-0342">GTP-binding</keyword>
<keyword id="KW-0460">Magnesium</keyword>
<keyword id="KW-0479">Metal-binding</keyword>
<keyword id="KW-0547">Nucleotide-binding</keyword>
<keyword id="KW-0717">Septation</keyword>
<name>ENGB_PEDPA</name>
<evidence type="ECO:0000255" key="1">
    <source>
        <dbReference type="HAMAP-Rule" id="MF_00321"/>
    </source>
</evidence>